<name>UVRC_ECOBW</name>
<reference key="1">
    <citation type="journal article" date="2009" name="J. Bacteriol.">
        <title>Genomic sequencing reveals regulatory mutations and recombinational events in the widely used MC4100 lineage of Escherichia coli K-12.</title>
        <authorList>
            <person name="Ferenci T."/>
            <person name="Zhou Z."/>
            <person name="Betteridge T."/>
            <person name="Ren Y."/>
            <person name="Liu Y."/>
            <person name="Feng L."/>
            <person name="Reeves P.R."/>
            <person name="Wang L."/>
        </authorList>
    </citation>
    <scope>NUCLEOTIDE SEQUENCE [LARGE SCALE GENOMIC DNA]</scope>
    <source>
        <strain>K12 / MC4100 / BW2952</strain>
    </source>
</reference>
<keyword id="KW-0963">Cytoplasm</keyword>
<keyword id="KW-0227">DNA damage</keyword>
<keyword id="KW-0228">DNA excision</keyword>
<keyword id="KW-0234">DNA repair</keyword>
<keyword id="KW-0267">Excision nuclease</keyword>
<keyword id="KW-0742">SOS response</keyword>
<proteinExistence type="inferred from homology"/>
<accession>C4ZQJ1</accession>
<protein>
    <recommendedName>
        <fullName evidence="1">UvrABC system protein C</fullName>
        <shortName evidence="1">Protein UvrC</shortName>
    </recommendedName>
    <alternativeName>
        <fullName evidence="1">Excinuclease ABC subunit C</fullName>
    </alternativeName>
</protein>
<comment type="function">
    <text evidence="1">The UvrABC repair system catalyzes the recognition and processing of DNA lesions. UvrC both incises the 5' and 3' sides of the lesion. The N-terminal half is responsible for the 3' incision and the C-terminal half is responsible for the 5' incision.</text>
</comment>
<comment type="subunit">
    <text evidence="1">Interacts with UvrB in an incision complex.</text>
</comment>
<comment type="subcellular location">
    <subcellularLocation>
        <location evidence="1">Cytoplasm</location>
    </subcellularLocation>
</comment>
<comment type="similarity">
    <text evidence="1">Belongs to the UvrC family.</text>
</comment>
<organism>
    <name type="scientific">Escherichia coli (strain K12 / MC4100 / BW2952)</name>
    <dbReference type="NCBI Taxonomy" id="595496"/>
    <lineage>
        <taxon>Bacteria</taxon>
        <taxon>Pseudomonadati</taxon>
        <taxon>Pseudomonadota</taxon>
        <taxon>Gammaproteobacteria</taxon>
        <taxon>Enterobacterales</taxon>
        <taxon>Enterobacteriaceae</taxon>
        <taxon>Escherichia</taxon>
    </lineage>
</organism>
<dbReference type="EMBL" id="CP001396">
    <property type="protein sequence ID" value="ACR63045.1"/>
    <property type="molecule type" value="Genomic_DNA"/>
</dbReference>
<dbReference type="RefSeq" id="WP_001283421.1">
    <property type="nucleotide sequence ID" value="NC_012759.1"/>
</dbReference>
<dbReference type="SMR" id="C4ZQJ1"/>
<dbReference type="GeneID" id="93776218"/>
<dbReference type="KEGG" id="ebw:BWG_1722"/>
<dbReference type="HOGENOM" id="CLU_014841_3_0_6"/>
<dbReference type="GO" id="GO:0005737">
    <property type="term" value="C:cytoplasm"/>
    <property type="evidence" value="ECO:0007669"/>
    <property type="project" value="UniProtKB-SubCell"/>
</dbReference>
<dbReference type="GO" id="GO:0009380">
    <property type="term" value="C:excinuclease repair complex"/>
    <property type="evidence" value="ECO:0007669"/>
    <property type="project" value="InterPro"/>
</dbReference>
<dbReference type="GO" id="GO:0003677">
    <property type="term" value="F:DNA binding"/>
    <property type="evidence" value="ECO:0007669"/>
    <property type="project" value="UniProtKB-UniRule"/>
</dbReference>
<dbReference type="GO" id="GO:0009381">
    <property type="term" value="F:excinuclease ABC activity"/>
    <property type="evidence" value="ECO:0007669"/>
    <property type="project" value="UniProtKB-UniRule"/>
</dbReference>
<dbReference type="GO" id="GO:0006289">
    <property type="term" value="P:nucleotide-excision repair"/>
    <property type="evidence" value="ECO:0007669"/>
    <property type="project" value="UniProtKB-UniRule"/>
</dbReference>
<dbReference type="GO" id="GO:0009432">
    <property type="term" value="P:SOS response"/>
    <property type="evidence" value="ECO:0007669"/>
    <property type="project" value="UniProtKB-UniRule"/>
</dbReference>
<dbReference type="CDD" id="cd10434">
    <property type="entry name" value="GIY-YIG_UvrC_Cho"/>
    <property type="match status" value="1"/>
</dbReference>
<dbReference type="FunFam" id="1.10.150.20:FF:000005">
    <property type="entry name" value="UvrABC system protein C"/>
    <property type="match status" value="1"/>
</dbReference>
<dbReference type="FunFam" id="3.30.420.340:FF:000001">
    <property type="entry name" value="UvrABC system protein C"/>
    <property type="match status" value="1"/>
</dbReference>
<dbReference type="FunFam" id="3.40.1440.10:FF:000001">
    <property type="entry name" value="UvrABC system protein C"/>
    <property type="match status" value="1"/>
</dbReference>
<dbReference type="FunFam" id="4.10.860.10:FF:000002">
    <property type="entry name" value="UvrABC system protein C"/>
    <property type="match status" value="1"/>
</dbReference>
<dbReference type="Gene3D" id="1.10.150.20">
    <property type="entry name" value="5' to 3' exonuclease, C-terminal subdomain"/>
    <property type="match status" value="1"/>
</dbReference>
<dbReference type="Gene3D" id="3.40.1440.10">
    <property type="entry name" value="GIY-YIG endonuclease"/>
    <property type="match status" value="1"/>
</dbReference>
<dbReference type="Gene3D" id="4.10.860.10">
    <property type="entry name" value="UVR domain"/>
    <property type="match status" value="1"/>
</dbReference>
<dbReference type="Gene3D" id="3.30.420.340">
    <property type="entry name" value="UvrC, RNAse H endonuclease domain"/>
    <property type="match status" value="1"/>
</dbReference>
<dbReference type="HAMAP" id="MF_00203">
    <property type="entry name" value="UvrC"/>
    <property type="match status" value="1"/>
</dbReference>
<dbReference type="InterPro" id="IPR000305">
    <property type="entry name" value="GIY-YIG_endonuc"/>
</dbReference>
<dbReference type="InterPro" id="IPR035901">
    <property type="entry name" value="GIY-YIG_endonuc_sf"/>
</dbReference>
<dbReference type="InterPro" id="IPR047296">
    <property type="entry name" value="GIY-YIG_UvrC_Cho"/>
</dbReference>
<dbReference type="InterPro" id="IPR003583">
    <property type="entry name" value="Hlx-hairpin-Hlx_DNA-bd_motif"/>
</dbReference>
<dbReference type="InterPro" id="IPR010994">
    <property type="entry name" value="RuvA_2-like"/>
</dbReference>
<dbReference type="InterPro" id="IPR001943">
    <property type="entry name" value="UVR_dom"/>
</dbReference>
<dbReference type="InterPro" id="IPR036876">
    <property type="entry name" value="UVR_dom_sf"/>
</dbReference>
<dbReference type="InterPro" id="IPR050066">
    <property type="entry name" value="UvrABC_protein_C"/>
</dbReference>
<dbReference type="InterPro" id="IPR004791">
    <property type="entry name" value="UvrC"/>
</dbReference>
<dbReference type="InterPro" id="IPR001162">
    <property type="entry name" value="UvrC_RNase_H_dom"/>
</dbReference>
<dbReference type="InterPro" id="IPR038476">
    <property type="entry name" value="UvrC_RNase_H_dom_sf"/>
</dbReference>
<dbReference type="NCBIfam" id="NF001824">
    <property type="entry name" value="PRK00558.1-5"/>
    <property type="match status" value="1"/>
</dbReference>
<dbReference type="NCBIfam" id="TIGR00194">
    <property type="entry name" value="uvrC"/>
    <property type="match status" value="1"/>
</dbReference>
<dbReference type="PANTHER" id="PTHR30562:SF1">
    <property type="entry name" value="UVRABC SYSTEM PROTEIN C"/>
    <property type="match status" value="1"/>
</dbReference>
<dbReference type="PANTHER" id="PTHR30562">
    <property type="entry name" value="UVRC/OXIDOREDUCTASE"/>
    <property type="match status" value="1"/>
</dbReference>
<dbReference type="Pfam" id="PF01541">
    <property type="entry name" value="GIY-YIG"/>
    <property type="match status" value="1"/>
</dbReference>
<dbReference type="Pfam" id="PF14520">
    <property type="entry name" value="HHH_5"/>
    <property type="match status" value="1"/>
</dbReference>
<dbReference type="Pfam" id="PF02151">
    <property type="entry name" value="UVR"/>
    <property type="match status" value="1"/>
</dbReference>
<dbReference type="Pfam" id="PF22920">
    <property type="entry name" value="UvrC_RNaseH"/>
    <property type="match status" value="1"/>
</dbReference>
<dbReference type="Pfam" id="PF08459">
    <property type="entry name" value="UvrC_RNaseH_dom"/>
    <property type="match status" value="1"/>
</dbReference>
<dbReference type="SMART" id="SM00465">
    <property type="entry name" value="GIYc"/>
    <property type="match status" value="1"/>
</dbReference>
<dbReference type="SMART" id="SM00278">
    <property type="entry name" value="HhH1"/>
    <property type="match status" value="2"/>
</dbReference>
<dbReference type="SUPFAM" id="SSF46600">
    <property type="entry name" value="C-terminal UvrC-binding domain of UvrB"/>
    <property type="match status" value="1"/>
</dbReference>
<dbReference type="SUPFAM" id="SSF82771">
    <property type="entry name" value="GIY-YIG endonuclease"/>
    <property type="match status" value="1"/>
</dbReference>
<dbReference type="SUPFAM" id="SSF47781">
    <property type="entry name" value="RuvA domain 2-like"/>
    <property type="match status" value="1"/>
</dbReference>
<dbReference type="PROSITE" id="PS50164">
    <property type="entry name" value="GIY_YIG"/>
    <property type="match status" value="1"/>
</dbReference>
<dbReference type="PROSITE" id="PS50151">
    <property type="entry name" value="UVR"/>
    <property type="match status" value="1"/>
</dbReference>
<dbReference type="PROSITE" id="PS50165">
    <property type="entry name" value="UVRC"/>
    <property type="match status" value="1"/>
</dbReference>
<sequence length="610" mass="68188">MSDQFDAKAFLKTVTSQPGVYRMYDAGGTVIYVGKAKDLKKRLSSYFRSNLASRKTEALVAQIQQIDVTVTHTETEALLLEHNYIKLYQPRYNVLLRDDKSYPFIFLSGDTHPRLAMHRGAKHAKGEYFGPFPNGYAVRETLALLQKIFPIRQCENSVYRNRSRPCLQYQIGRCLGPCVEGLVSEEEYAQQVEYVRLFLSGKDDQVLTQLISRMETASQNLEFEEAARIRDQIQAVRRVTEKQFVSNTGDDLDVIGVAFDAGMACVHVLFIRQGKVLGSRSYFPKVPGGTELSEVVETFVGQFYLQGSQMRTLPGEILLDFNLSDKTLLADSLSELAGRKINVQTKPRGDRARYLKLARTNAATALTSKLSQQSTVHQRLTALASVLKLPEVKRMECFDISHTMGEQTVASCVVFDANGPLRAEYRRYNITGITPGDDYAAMNQVLRRRYGKAIDDSKIPDVILIDGGKGQLAQAKNVFAELDVSWDKNHPLLLGVAKGADRKAGLETLFFEPEGEGFSLPPDSPALHVIQHIRDESHDHAIGGHRKKRAKVKNTSSLETIEGVGPKRRQMLLKYMGGLQGLRNASVEEIAKVPGISQGLAEKIFWSLKH</sequence>
<gene>
    <name evidence="1" type="primary">uvrC</name>
    <name type="ordered locus">BWG_1722</name>
</gene>
<evidence type="ECO:0000255" key="1">
    <source>
        <dbReference type="HAMAP-Rule" id="MF_00203"/>
    </source>
</evidence>
<feature type="chain" id="PRO_1000204118" description="UvrABC system protein C">
    <location>
        <begin position="1"/>
        <end position="610"/>
    </location>
</feature>
<feature type="domain" description="GIY-YIG" evidence="1">
    <location>
        <begin position="16"/>
        <end position="94"/>
    </location>
</feature>
<feature type="domain" description="UVR" evidence="1">
    <location>
        <begin position="204"/>
        <end position="239"/>
    </location>
</feature>